<accession>Q7U4H8</accession>
<dbReference type="EMBL" id="BX569694">
    <property type="protein sequence ID" value="CAE08604.1"/>
    <property type="molecule type" value="Genomic_DNA"/>
</dbReference>
<dbReference type="RefSeq" id="WP_011128946.1">
    <property type="nucleotide sequence ID" value="NC_005070.1"/>
</dbReference>
<dbReference type="SMR" id="Q7U4H8"/>
<dbReference type="STRING" id="84588.SYNW2089"/>
<dbReference type="KEGG" id="syw:SYNW2089"/>
<dbReference type="eggNOG" id="COG0100">
    <property type="taxonomic scope" value="Bacteria"/>
</dbReference>
<dbReference type="HOGENOM" id="CLU_072439_5_0_3"/>
<dbReference type="Proteomes" id="UP000001422">
    <property type="component" value="Chromosome"/>
</dbReference>
<dbReference type="GO" id="GO:1990904">
    <property type="term" value="C:ribonucleoprotein complex"/>
    <property type="evidence" value="ECO:0007669"/>
    <property type="project" value="UniProtKB-KW"/>
</dbReference>
<dbReference type="GO" id="GO:0005840">
    <property type="term" value="C:ribosome"/>
    <property type="evidence" value="ECO:0007669"/>
    <property type="project" value="UniProtKB-KW"/>
</dbReference>
<dbReference type="GO" id="GO:0019843">
    <property type="term" value="F:rRNA binding"/>
    <property type="evidence" value="ECO:0007669"/>
    <property type="project" value="UniProtKB-UniRule"/>
</dbReference>
<dbReference type="GO" id="GO:0003735">
    <property type="term" value="F:structural constituent of ribosome"/>
    <property type="evidence" value="ECO:0007669"/>
    <property type="project" value="InterPro"/>
</dbReference>
<dbReference type="GO" id="GO:0006412">
    <property type="term" value="P:translation"/>
    <property type="evidence" value="ECO:0007669"/>
    <property type="project" value="UniProtKB-UniRule"/>
</dbReference>
<dbReference type="FunFam" id="3.30.420.80:FF:000001">
    <property type="entry name" value="30S ribosomal protein S11"/>
    <property type="match status" value="1"/>
</dbReference>
<dbReference type="Gene3D" id="3.30.420.80">
    <property type="entry name" value="Ribosomal protein S11"/>
    <property type="match status" value="1"/>
</dbReference>
<dbReference type="HAMAP" id="MF_01310">
    <property type="entry name" value="Ribosomal_uS11"/>
    <property type="match status" value="1"/>
</dbReference>
<dbReference type="InterPro" id="IPR001971">
    <property type="entry name" value="Ribosomal_uS11"/>
</dbReference>
<dbReference type="InterPro" id="IPR019981">
    <property type="entry name" value="Ribosomal_uS11_bac-type"/>
</dbReference>
<dbReference type="InterPro" id="IPR018102">
    <property type="entry name" value="Ribosomal_uS11_CS"/>
</dbReference>
<dbReference type="InterPro" id="IPR036967">
    <property type="entry name" value="Ribosomal_uS11_sf"/>
</dbReference>
<dbReference type="NCBIfam" id="NF003698">
    <property type="entry name" value="PRK05309.1"/>
    <property type="match status" value="1"/>
</dbReference>
<dbReference type="NCBIfam" id="TIGR03632">
    <property type="entry name" value="uS11_bact"/>
    <property type="match status" value="1"/>
</dbReference>
<dbReference type="PANTHER" id="PTHR11759">
    <property type="entry name" value="40S RIBOSOMAL PROTEIN S14/30S RIBOSOMAL PROTEIN S11"/>
    <property type="match status" value="1"/>
</dbReference>
<dbReference type="Pfam" id="PF00411">
    <property type="entry name" value="Ribosomal_S11"/>
    <property type="match status" value="1"/>
</dbReference>
<dbReference type="PIRSF" id="PIRSF002131">
    <property type="entry name" value="Ribosomal_S11"/>
    <property type="match status" value="1"/>
</dbReference>
<dbReference type="SUPFAM" id="SSF53137">
    <property type="entry name" value="Translational machinery components"/>
    <property type="match status" value="1"/>
</dbReference>
<dbReference type="PROSITE" id="PS00054">
    <property type="entry name" value="RIBOSOMAL_S11"/>
    <property type="match status" value="1"/>
</dbReference>
<gene>
    <name evidence="1" type="primary">rpsK</name>
    <name evidence="1" type="synonym">rps11</name>
    <name type="ordered locus">SYNW2089</name>
</gene>
<reference key="1">
    <citation type="journal article" date="2003" name="Nature">
        <title>The genome of a motile marine Synechococcus.</title>
        <authorList>
            <person name="Palenik B."/>
            <person name="Brahamsha B."/>
            <person name="Larimer F.W."/>
            <person name="Land M.L."/>
            <person name="Hauser L."/>
            <person name="Chain P."/>
            <person name="Lamerdin J.E."/>
            <person name="Regala W."/>
            <person name="Allen E.E."/>
            <person name="McCarren J."/>
            <person name="Paulsen I.T."/>
            <person name="Dufresne A."/>
            <person name="Partensky F."/>
            <person name="Webb E.A."/>
            <person name="Waterbury J."/>
        </authorList>
    </citation>
    <scope>NUCLEOTIDE SEQUENCE [LARGE SCALE GENOMIC DNA]</scope>
    <source>
        <strain>WH8102</strain>
    </source>
</reference>
<name>RS11_PARMW</name>
<organism>
    <name type="scientific">Parasynechococcus marenigrum (strain WH8102)</name>
    <dbReference type="NCBI Taxonomy" id="84588"/>
    <lineage>
        <taxon>Bacteria</taxon>
        <taxon>Bacillati</taxon>
        <taxon>Cyanobacteriota</taxon>
        <taxon>Cyanophyceae</taxon>
        <taxon>Synechococcales</taxon>
        <taxon>Prochlorococcaceae</taxon>
        <taxon>Parasynechococcus</taxon>
        <taxon>Parasynechococcus marenigrum</taxon>
    </lineage>
</organism>
<proteinExistence type="inferred from homology"/>
<feature type="chain" id="PRO_0000123242" description="Small ribosomal subunit protein uS11">
    <location>
        <begin position="1"/>
        <end position="130"/>
    </location>
</feature>
<evidence type="ECO:0000255" key="1">
    <source>
        <dbReference type="HAMAP-Rule" id="MF_01310"/>
    </source>
</evidence>
<evidence type="ECO:0000305" key="2"/>
<protein>
    <recommendedName>
        <fullName evidence="1">Small ribosomal subunit protein uS11</fullName>
    </recommendedName>
    <alternativeName>
        <fullName evidence="2">30S ribosomal protein S11</fullName>
    </alternativeName>
</protein>
<comment type="function">
    <text evidence="1">Located on the platform of the 30S subunit, it bridges several disparate RNA helices of the 16S rRNA. Forms part of the Shine-Dalgarno cleft in the 70S ribosome.</text>
</comment>
<comment type="subunit">
    <text evidence="1">Part of the 30S ribosomal subunit. Interacts with proteins S7 and S18. Binds to IF-3.</text>
</comment>
<comment type="similarity">
    <text evidence="1">Belongs to the universal ribosomal protein uS11 family.</text>
</comment>
<keyword id="KW-0687">Ribonucleoprotein</keyword>
<keyword id="KW-0689">Ribosomal protein</keyword>
<keyword id="KW-0694">RNA-binding</keyword>
<keyword id="KW-0699">rRNA-binding</keyword>
<sequence length="130" mass="13782">MAKPAKKTGPKKAKRNVPNGVAHIQSTFNNTIVSITDTSGEVISWSSAGASGFKGARKGTPFAAQTAAEAAARRALDQGMRQIEVLVKGPGSGRETAIRALQVAGLEITLIRDVTPLPHNGCRRPKRRRV</sequence>